<name>NDK_ACICJ</name>
<dbReference type="EC" id="2.7.4.6" evidence="1"/>
<dbReference type="EMBL" id="CP000697">
    <property type="protein sequence ID" value="ABQ30522.1"/>
    <property type="molecule type" value="Genomic_DNA"/>
</dbReference>
<dbReference type="RefSeq" id="WP_011942152.1">
    <property type="nucleotide sequence ID" value="NC_009484.1"/>
</dbReference>
<dbReference type="SMR" id="A5FY40"/>
<dbReference type="STRING" id="349163.Acry_1311"/>
<dbReference type="KEGG" id="acr:Acry_1311"/>
<dbReference type="eggNOG" id="COG0105">
    <property type="taxonomic scope" value="Bacteria"/>
</dbReference>
<dbReference type="HOGENOM" id="CLU_060216_8_1_5"/>
<dbReference type="Proteomes" id="UP000000245">
    <property type="component" value="Chromosome"/>
</dbReference>
<dbReference type="GO" id="GO:0005737">
    <property type="term" value="C:cytoplasm"/>
    <property type="evidence" value="ECO:0007669"/>
    <property type="project" value="UniProtKB-SubCell"/>
</dbReference>
<dbReference type="GO" id="GO:0005524">
    <property type="term" value="F:ATP binding"/>
    <property type="evidence" value="ECO:0007669"/>
    <property type="project" value="UniProtKB-UniRule"/>
</dbReference>
<dbReference type="GO" id="GO:0046872">
    <property type="term" value="F:metal ion binding"/>
    <property type="evidence" value="ECO:0007669"/>
    <property type="project" value="UniProtKB-KW"/>
</dbReference>
<dbReference type="GO" id="GO:0004550">
    <property type="term" value="F:nucleoside diphosphate kinase activity"/>
    <property type="evidence" value="ECO:0007669"/>
    <property type="project" value="UniProtKB-UniRule"/>
</dbReference>
<dbReference type="GO" id="GO:0006241">
    <property type="term" value="P:CTP biosynthetic process"/>
    <property type="evidence" value="ECO:0007669"/>
    <property type="project" value="UniProtKB-UniRule"/>
</dbReference>
<dbReference type="GO" id="GO:0006183">
    <property type="term" value="P:GTP biosynthetic process"/>
    <property type="evidence" value="ECO:0007669"/>
    <property type="project" value="UniProtKB-UniRule"/>
</dbReference>
<dbReference type="GO" id="GO:0006228">
    <property type="term" value="P:UTP biosynthetic process"/>
    <property type="evidence" value="ECO:0007669"/>
    <property type="project" value="UniProtKB-UniRule"/>
</dbReference>
<dbReference type="CDD" id="cd04413">
    <property type="entry name" value="NDPk_I"/>
    <property type="match status" value="1"/>
</dbReference>
<dbReference type="FunFam" id="3.30.70.141:FF:000001">
    <property type="entry name" value="Nucleoside diphosphate kinase"/>
    <property type="match status" value="1"/>
</dbReference>
<dbReference type="Gene3D" id="3.30.70.141">
    <property type="entry name" value="Nucleoside diphosphate kinase-like domain"/>
    <property type="match status" value="1"/>
</dbReference>
<dbReference type="HAMAP" id="MF_00451">
    <property type="entry name" value="NDP_kinase"/>
    <property type="match status" value="1"/>
</dbReference>
<dbReference type="InterPro" id="IPR034907">
    <property type="entry name" value="NDK-like_dom"/>
</dbReference>
<dbReference type="InterPro" id="IPR036850">
    <property type="entry name" value="NDK-like_dom_sf"/>
</dbReference>
<dbReference type="InterPro" id="IPR001564">
    <property type="entry name" value="Nucleoside_diP_kinase"/>
</dbReference>
<dbReference type="NCBIfam" id="NF001908">
    <property type="entry name" value="PRK00668.1"/>
    <property type="match status" value="1"/>
</dbReference>
<dbReference type="PANTHER" id="PTHR46161">
    <property type="entry name" value="NUCLEOSIDE DIPHOSPHATE KINASE"/>
    <property type="match status" value="1"/>
</dbReference>
<dbReference type="PANTHER" id="PTHR46161:SF3">
    <property type="entry name" value="NUCLEOSIDE DIPHOSPHATE KINASE DDB_G0292928-RELATED"/>
    <property type="match status" value="1"/>
</dbReference>
<dbReference type="Pfam" id="PF00334">
    <property type="entry name" value="NDK"/>
    <property type="match status" value="1"/>
</dbReference>
<dbReference type="PRINTS" id="PR01243">
    <property type="entry name" value="NUCDPKINASE"/>
</dbReference>
<dbReference type="SMART" id="SM00562">
    <property type="entry name" value="NDK"/>
    <property type="match status" value="1"/>
</dbReference>
<dbReference type="SUPFAM" id="SSF54919">
    <property type="entry name" value="Nucleoside diphosphate kinase, NDK"/>
    <property type="match status" value="1"/>
</dbReference>
<dbReference type="PROSITE" id="PS51374">
    <property type="entry name" value="NDPK_LIKE"/>
    <property type="match status" value="1"/>
</dbReference>
<gene>
    <name evidence="1" type="primary">ndk</name>
    <name type="ordered locus">Acry_1311</name>
</gene>
<sequence>MATERTLSIIKPDATRRNLTGRINAKFEEAGLRIVAQKRIRLTKDQAEAFYGVHKERPFFAGLVSFMTSGPVVVQVLEGDDAVARNRAIMGATDPRKAEAGTIRAEFAEDIEANSVHGSDAADTAAQEIAFFFAGVEIVG</sequence>
<organism>
    <name type="scientific">Acidiphilium cryptum (strain JF-5)</name>
    <dbReference type="NCBI Taxonomy" id="349163"/>
    <lineage>
        <taxon>Bacteria</taxon>
        <taxon>Pseudomonadati</taxon>
        <taxon>Pseudomonadota</taxon>
        <taxon>Alphaproteobacteria</taxon>
        <taxon>Acetobacterales</taxon>
        <taxon>Acidocellaceae</taxon>
        <taxon>Acidiphilium</taxon>
    </lineage>
</organism>
<comment type="function">
    <text evidence="1">Major role in the synthesis of nucleoside triphosphates other than ATP. The ATP gamma phosphate is transferred to the NDP beta phosphate via a ping-pong mechanism, using a phosphorylated active-site intermediate.</text>
</comment>
<comment type="catalytic activity">
    <reaction evidence="1">
        <text>a 2'-deoxyribonucleoside 5'-diphosphate + ATP = a 2'-deoxyribonucleoside 5'-triphosphate + ADP</text>
        <dbReference type="Rhea" id="RHEA:44640"/>
        <dbReference type="ChEBI" id="CHEBI:30616"/>
        <dbReference type="ChEBI" id="CHEBI:61560"/>
        <dbReference type="ChEBI" id="CHEBI:73316"/>
        <dbReference type="ChEBI" id="CHEBI:456216"/>
        <dbReference type="EC" id="2.7.4.6"/>
    </reaction>
</comment>
<comment type="catalytic activity">
    <reaction evidence="1">
        <text>a ribonucleoside 5'-diphosphate + ATP = a ribonucleoside 5'-triphosphate + ADP</text>
        <dbReference type="Rhea" id="RHEA:18113"/>
        <dbReference type="ChEBI" id="CHEBI:30616"/>
        <dbReference type="ChEBI" id="CHEBI:57930"/>
        <dbReference type="ChEBI" id="CHEBI:61557"/>
        <dbReference type="ChEBI" id="CHEBI:456216"/>
        <dbReference type="EC" id="2.7.4.6"/>
    </reaction>
</comment>
<comment type="cofactor">
    <cofactor evidence="1">
        <name>Mg(2+)</name>
        <dbReference type="ChEBI" id="CHEBI:18420"/>
    </cofactor>
</comment>
<comment type="subunit">
    <text evidence="1">Homotetramer.</text>
</comment>
<comment type="subcellular location">
    <subcellularLocation>
        <location evidence="1">Cytoplasm</location>
    </subcellularLocation>
</comment>
<comment type="similarity">
    <text evidence="1">Belongs to the NDK family.</text>
</comment>
<reference key="1">
    <citation type="submission" date="2007-05" db="EMBL/GenBank/DDBJ databases">
        <title>Complete sequence of chromosome of Acidiphilium cryptum JF-5.</title>
        <authorList>
            <consortium name="US DOE Joint Genome Institute"/>
            <person name="Copeland A."/>
            <person name="Lucas S."/>
            <person name="Lapidus A."/>
            <person name="Barry K."/>
            <person name="Detter J.C."/>
            <person name="Glavina del Rio T."/>
            <person name="Hammon N."/>
            <person name="Israni S."/>
            <person name="Dalin E."/>
            <person name="Tice H."/>
            <person name="Pitluck S."/>
            <person name="Sims D."/>
            <person name="Brettin T."/>
            <person name="Bruce D."/>
            <person name="Han C."/>
            <person name="Schmutz J."/>
            <person name="Larimer F."/>
            <person name="Land M."/>
            <person name="Hauser L."/>
            <person name="Kyrpides N."/>
            <person name="Kim E."/>
            <person name="Magnuson T."/>
            <person name="Richardson P."/>
        </authorList>
    </citation>
    <scope>NUCLEOTIDE SEQUENCE [LARGE SCALE GENOMIC DNA]</scope>
    <source>
        <strain>JF-5</strain>
    </source>
</reference>
<protein>
    <recommendedName>
        <fullName evidence="1">Nucleoside diphosphate kinase</fullName>
        <shortName evidence="1">NDK</shortName>
        <shortName evidence="1">NDP kinase</shortName>
        <ecNumber evidence="1">2.7.4.6</ecNumber>
    </recommendedName>
    <alternativeName>
        <fullName evidence="1">Nucleoside-2-P kinase</fullName>
    </alternativeName>
</protein>
<feature type="chain" id="PRO_1000026201" description="Nucleoside diphosphate kinase">
    <location>
        <begin position="1"/>
        <end position="140"/>
    </location>
</feature>
<feature type="active site" description="Pros-phosphohistidine intermediate" evidence="1">
    <location>
        <position position="117"/>
    </location>
</feature>
<feature type="binding site" evidence="1">
    <location>
        <position position="11"/>
    </location>
    <ligand>
        <name>ATP</name>
        <dbReference type="ChEBI" id="CHEBI:30616"/>
    </ligand>
</feature>
<feature type="binding site" evidence="1">
    <location>
        <position position="59"/>
    </location>
    <ligand>
        <name>ATP</name>
        <dbReference type="ChEBI" id="CHEBI:30616"/>
    </ligand>
</feature>
<feature type="binding site" evidence="1">
    <location>
        <position position="87"/>
    </location>
    <ligand>
        <name>ATP</name>
        <dbReference type="ChEBI" id="CHEBI:30616"/>
    </ligand>
</feature>
<feature type="binding site" evidence="1">
    <location>
        <position position="93"/>
    </location>
    <ligand>
        <name>ATP</name>
        <dbReference type="ChEBI" id="CHEBI:30616"/>
    </ligand>
</feature>
<feature type="binding site" evidence="1">
    <location>
        <position position="104"/>
    </location>
    <ligand>
        <name>ATP</name>
        <dbReference type="ChEBI" id="CHEBI:30616"/>
    </ligand>
</feature>
<feature type="binding site" evidence="1">
    <location>
        <position position="114"/>
    </location>
    <ligand>
        <name>ATP</name>
        <dbReference type="ChEBI" id="CHEBI:30616"/>
    </ligand>
</feature>
<proteinExistence type="inferred from homology"/>
<accession>A5FY40</accession>
<evidence type="ECO:0000255" key="1">
    <source>
        <dbReference type="HAMAP-Rule" id="MF_00451"/>
    </source>
</evidence>
<keyword id="KW-0067">ATP-binding</keyword>
<keyword id="KW-0963">Cytoplasm</keyword>
<keyword id="KW-0418">Kinase</keyword>
<keyword id="KW-0460">Magnesium</keyword>
<keyword id="KW-0479">Metal-binding</keyword>
<keyword id="KW-0546">Nucleotide metabolism</keyword>
<keyword id="KW-0547">Nucleotide-binding</keyword>
<keyword id="KW-0597">Phosphoprotein</keyword>
<keyword id="KW-1185">Reference proteome</keyword>
<keyword id="KW-0808">Transferase</keyword>